<dbReference type="EMBL" id="BA000031">
    <property type="protein sequence ID" value="BAC59294.1"/>
    <property type="molecule type" value="Genomic_DNA"/>
</dbReference>
<dbReference type="RefSeq" id="NP_797410.1">
    <property type="nucleotide sequence ID" value="NC_004603.1"/>
</dbReference>
<dbReference type="RefSeq" id="WP_005457256.1">
    <property type="nucleotide sequence ID" value="NC_004603.1"/>
</dbReference>
<dbReference type="SMR" id="Q87QW8"/>
<dbReference type="GeneID" id="1188535"/>
<dbReference type="KEGG" id="vpa:VP1031"/>
<dbReference type="PATRIC" id="fig|223926.6.peg.977"/>
<dbReference type="eggNOG" id="COG3381">
    <property type="taxonomic scope" value="Bacteria"/>
</dbReference>
<dbReference type="HOGENOM" id="CLU_077650_4_0_6"/>
<dbReference type="Proteomes" id="UP000002493">
    <property type="component" value="Chromosome 1"/>
</dbReference>
<dbReference type="GO" id="GO:0005737">
    <property type="term" value="C:cytoplasm"/>
    <property type="evidence" value="ECO:0007669"/>
    <property type="project" value="UniProtKB-SubCell"/>
</dbReference>
<dbReference type="GO" id="GO:0051259">
    <property type="term" value="P:protein complex oligomerization"/>
    <property type="evidence" value="ECO:0007669"/>
    <property type="project" value="InterPro"/>
</dbReference>
<dbReference type="GO" id="GO:0006457">
    <property type="term" value="P:protein folding"/>
    <property type="evidence" value="ECO:0007669"/>
    <property type="project" value="UniProtKB-UniRule"/>
</dbReference>
<dbReference type="Gene3D" id="1.20.120.1820">
    <property type="match status" value="1"/>
</dbReference>
<dbReference type="Gene3D" id="1.20.1280.20">
    <property type="entry name" value="HscB, C-terminal domain"/>
    <property type="match status" value="1"/>
</dbReference>
<dbReference type="HAMAP" id="MF_01150">
    <property type="entry name" value="TorD"/>
    <property type="match status" value="1"/>
</dbReference>
<dbReference type="InterPro" id="IPR023069">
    <property type="entry name" value="Chaperone_TorD"/>
</dbReference>
<dbReference type="InterPro" id="IPR020945">
    <property type="entry name" value="DMSO/NO3_reduct_chaperone"/>
</dbReference>
<dbReference type="InterPro" id="IPR036386">
    <property type="entry name" value="HscB_C_sf"/>
</dbReference>
<dbReference type="InterPro" id="IPR036411">
    <property type="entry name" value="TorD-like_sf"/>
</dbReference>
<dbReference type="InterPro" id="IPR050289">
    <property type="entry name" value="TorD/DmsD_chaperones"/>
</dbReference>
<dbReference type="NCBIfam" id="NF003442">
    <property type="entry name" value="PRK04976.1"/>
    <property type="match status" value="1"/>
</dbReference>
<dbReference type="PANTHER" id="PTHR34227:SF11">
    <property type="entry name" value="CHAPERONE PROTEIN TORD"/>
    <property type="match status" value="1"/>
</dbReference>
<dbReference type="PANTHER" id="PTHR34227">
    <property type="entry name" value="CHAPERONE PROTEIN YCDY"/>
    <property type="match status" value="1"/>
</dbReference>
<dbReference type="Pfam" id="PF02613">
    <property type="entry name" value="Nitrate_red_del"/>
    <property type="match status" value="1"/>
</dbReference>
<dbReference type="SUPFAM" id="SSF89155">
    <property type="entry name" value="TorD-like"/>
    <property type="match status" value="1"/>
</dbReference>
<gene>
    <name evidence="1" type="primary">torD</name>
    <name type="ordered locus">VP1031</name>
</gene>
<organism>
    <name type="scientific">Vibrio parahaemolyticus serotype O3:K6 (strain RIMD 2210633)</name>
    <dbReference type="NCBI Taxonomy" id="223926"/>
    <lineage>
        <taxon>Bacteria</taxon>
        <taxon>Pseudomonadati</taxon>
        <taxon>Pseudomonadota</taxon>
        <taxon>Gammaproteobacteria</taxon>
        <taxon>Vibrionales</taxon>
        <taxon>Vibrionaceae</taxon>
        <taxon>Vibrio</taxon>
    </lineage>
</organism>
<name>TORD_VIBPA</name>
<reference key="1">
    <citation type="journal article" date="2003" name="Lancet">
        <title>Genome sequence of Vibrio parahaemolyticus: a pathogenic mechanism distinct from that of V. cholerae.</title>
        <authorList>
            <person name="Makino K."/>
            <person name="Oshima K."/>
            <person name="Kurokawa K."/>
            <person name="Yokoyama K."/>
            <person name="Uda T."/>
            <person name="Tagomori K."/>
            <person name="Iijima Y."/>
            <person name="Najima M."/>
            <person name="Nakano M."/>
            <person name="Yamashita A."/>
            <person name="Kubota Y."/>
            <person name="Kimura S."/>
            <person name="Yasunaga T."/>
            <person name="Honda T."/>
            <person name="Shinagawa H."/>
            <person name="Hattori M."/>
            <person name="Iida T."/>
        </authorList>
    </citation>
    <scope>NUCLEOTIDE SEQUENCE [LARGE SCALE GENOMIC DNA]</scope>
    <source>
        <strain>RIMD 2210633</strain>
    </source>
</reference>
<keyword id="KW-0143">Chaperone</keyword>
<keyword id="KW-0963">Cytoplasm</keyword>
<accession>Q87QW8</accession>
<protein>
    <recommendedName>
        <fullName evidence="1">Chaperone protein TorD</fullName>
    </recommendedName>
</protein>
<comment type="function">
    <text evidence="1">Involved in the biogenesis of TorA. Acts on TorA before the insertion of the molybdenum cofactor and, as a result, probably favors a conformation of the apoenzyme that is competent for acquiring the cofactor.</text>
</comment>
<comment type="subcellular location">
    <subcellularLocation>
        <location evidence="1">Cytoplasm</location>
    </subcellularLocation>
</comment>
<comment type="similarity">
    <text evidence="1">Belongs to the TorD/DmsD family. TorD subfamily.</text>
</comment>
<proteinExistence type="inferred from homology"/>
<sequence length="215" mass="24751">MQEVKAFNEKRAEIYWWFSSLFAKELSEKELETYHSVEIRSFLAGLGENESLKPAVDSLVDALNRLQDRNDAQLELAADFCELFLKTDKYGALPYASMYIGESGLLNDKPAEEMEKLMADFGVQVDENLKEPADHLAVELDFLGNMIIRSNELEQEKHMEEAFVKQNDFIQNQLMSWLPKFAEKCKQFDEFGFYLSVAQLLIAFCKLDSAYLLGE</sequence>
<feature type="chain" id="PRO_0000211646" description="Chaperone protein TorD">
    <location>
        <begin position="1"/>
        <end position="215"/>
    </location>
</feature>
<evidence type="ECO:0000255" key="1">
    <source>
        <dbReference type="HAMAP-Rule" id="MF_01150"/>
    </source>
</evidence>